<reference key="1">
    <citation type="journal article" date="2009" name="PLoS ONE">
        <title>The complete genome of Teredinibacter turnerae T7901: an intracellular endosymbiont of marine wood-boring bivalves (shipworms).</title>
        <authorList>
            <person name="Yang J.C."/>
            <person name="Madupu R."/>
            <person name="Durkin A.S."/>
            <person name="Ekborg N.A."/>
            <person name="Pedamallu C.S."/>
            <person name="Hostetler J.B."/>
            <person name="Radune D."/>
            <person name="Toms B.S."/>
            <person name="Henrissat B."/>
            <person name="Coutinho P.M."/>
            <person name="Schwarz S."/>
            <person name="Field L."/>
            <person name="Trindade-Silva A.E."/>
            <person name="Soares C.A.G."/>
            <person name="Elshahawi S."/>
            <person name="Hanora A."/>
            <person name="Schmidt E.W."/>
            <person name="Haygood M.G."/>
            <person name="Posfai J."/>
            <person name="Benner J."/>
            <person name="Madinger C."/>
            <person name="Nove J."/>
            <person name="Anton B."/>
            <person name="Chaudhary K."/>
            <person name="Foster J."/>
            <person name="Holman A."/>
            <person name="Kumar S."/>
            <person name="Lessard P.A."/>
            <person name="Luyten Y.A."/>
            <person name="Slatko B."/>
            <person name="Wood N."/>
            <person name="Wu B."/>
            <person name="Teplitski M."/>
            <person name="Mougous J.D."/>
            <person name="Ward N."/>
            <person name="Eisen J.A."/>
            <person name="Badger J.H."/>
            <person name="Distel D.L."/>
        </authorList>
    </citation>
    <scope>NUCLEOTIDE SEQUENCE [LARGE SCALE GENOMIC DNA]</scope>
    <source>
        <strain>ATCC 39867 / T7901</strain>
    </source>
</reference>
<gene>
    <name evidence="1" type="primary">hisB</name>
    <name type="ordered locus">TERTU_0417</name>
</gene>
<accession>C5BMF2</accession>
<feature type="chain" id="PRO_1000202524" description="Imidazoleglycerol-phosphate dehydratase">
    <location>
        <begin position="1"/>
        <end position="197"/>
    </location>
</feature>
<dbReference type="EC" id="4.2.1.19" evidence="1"/>
<dbReference type="EMBL" id="CP001614">
    <property type="protein sequence ID" value="ACR10903.1"/>
    <property type="molecule type" value="Genomic_DNA"/>
</dbReference>
<dbReference type="RefSeq" id="WP_015817015.1">
    <property type="nucleotide sequence ID" value="NC_012997.1"/>
</dbReference>
<dbReference type="SMR" id="C5BMF2"/>
<dbReference type="STRING" id="377629.TERTU_0417"/>
<dbReference type="KEGG" id="ttu:TERTU_0417"/>
<dbReference type="eggNOG" id="COG0131">
    <property type="taxonomic scope" value="Bacteria"/>
</dbReference>
<dbReference type="HOGENOM" id="CLU_044308_3_0_6"/>
<dbReference type="OrthoDB" id="9790411at2"/>
<dbReference type="UniPathway" id="UPA00031">
    <property type="reaction ID" value="UER00011"/>
</dbReference>
<dbReference type="Proteomes" id="UP000009080">
    <property type="component" value="Chromosome"/>
</dbReference>
<dbReference type="GO" id="GO:0005737">
    <property type="term" value="C:cytoplasm"/>
    <property type="evidence" value="ECO:0007669"/>
    <property type="project" value="UniProtKB-SubCell"/>
</dbReference>
<dbReference type="GO" id="GO:0004424">
    <property type="term" value="F:imidazoleglycerol-phosphate dehydratase activity"/>
    <property type="evidence" value="ECO:0007669"/>
    <property type="project" value="UniProtKB-UniRule"/>
</dbReference>
<dbReference type="GO" id="GO:0000105">
    <property type="term" value="P:L-histidine biosynthetic process"/>
    <property type="evidence" value="ECO:0007669"/>
    <property type="project" value="UniProtKB-UniRule"/>
</dbReference>
<dbReference type="CDD" id="cd07914">
    <property type="entry name" value="IGPD"/>
    <property type="match status" value="1"/>
</dbReference>
<dbReference type="FunFam" id="3.30.230.40:FF:000002">
    <property type="entry name" value="Imidazoleglycerol-phosphate dehydratase"/>
    <property type="match status" value="1"/>
</dbReference>
<dbReference type="FunFam" id="3.30.230.40:FF:000003">
    <property type="entry name" value="Imidazoleglycerol-phosphate dehydratase HisB"/>
    <property type="match status" value="1"/>
</dbReference>
<dbReference type="Gene3D" id="3.30.230.40">
    <property type="entry name" value="Imidazole glycerol phosphate dehydratase, domain 1"/>
    <property type="match status" value="2"/>
</dbReference>
<dbReference type="HAMAP" id="MF_00076">
    <property type="entry name" value="HisB"/>
    <property type="match status" value="1"/>
</dbReference>
<dbReference type="InterPro" id="IPR038494">
    <property type="entry name" value="IGPD_sf"/>
</dbReference>
<dbReference type="InterPro" id="IPR000807">
    <property type="entry name" value="ImidazoleglycerolP_deHydtase"/>
</dbReference>
<dbReference type="InterPro" id="IPR020565">
    <property type="entry name" value="ImidazoleglycerP_deHydtase_CS"/>
</dbReference>
<dbReference type="InterPro" id="IPR020568">
    <property type="entry name" value="Ribosomal_Su5_D2-typ_SF"/>
</dbReference>
<dbReference type="NCBIfam" id="NF002106">
    <property type="entry name" value="PRK00951.1-1"/>
    <property type="match status" value="1"/>
</dbReference>
<dbReference type="NCBIfam" id="NF002109">
    <property type="entry name" value="PRK00951.1-5"/>
    <property type="match status" value="1"/>
</dbReference>
<dbReference type="NCBIfam" id="NF002111">
    <property type="entry name" value="PRK00951.2-1"/>
    <property type="match status" value="1"/>
</dbReference>
<dbReference type="NCBIfam" id="NF002114">
    <property type="entry name" value="PRK00951.2-4"/>
    <property type="match status" value="1"/>
</dbReference>
<dbReference type="PANTHER" id="PTHR23133:SF2">
    <property type="entry name" value="IMIDAZOLEGLYCEROL-PHOSPHATE DEHYDRATASE"/>
    <property type="match status" value="1"/>
</dbReference>
<dbReference type="PANTHER" id="PTHR23133">
    <property type="entry name" value="IMIDAZOLEGLYCEROL-PHOSPHATE DEHYDRATASE HIS7"/>
    <property type="match status" value="1"/>
</dbReference>
<dbReference type="Pfam" id="PF00475">
    <property type="entry name" value="IGPD"/>
    <property type="match status" value="1"/>
</dbReference>
<dbReference type="SUPFAM" id="SSF54211">
    <property type="entry name" value="Ribosomal protein S5 domain 2-like"/>
    <property type="match status" value="2"/>
</dbReference>
<dbReference type="PROSITE" id="PS00954">
    <property type="entry name" value="IGP_DEHYDRATASE_1"/>
    <property type="match status" value="1"/>
</dbReference>
<dbReference type="PROSITE" id="PS00955">
    <property type="entry name" value="IGP_DEHYDRATASE_2"/>
    <property type="match status" value="1"/>
</dbReference>
<proteinExistence type="inferred from homology"/>
<name>HIS7_TERTT</name>
<evidence type="ECO:0000255" key="1">
    <source>
        <dbReference type="HAMAP-Rule" id="MF_00076"/>
    </source>
</evidence>
<comment type="catalytic activity">
    <reaction evidence="1">
        <text>D-erythro-1-(imidazol-4-yl)glycerol 3-phosphate = 3-(imidazol-4-yl)-2-oxopropyl phosphate + H2O</text>
        <dbReference type="Rhea" id="RHEA:11040"/>
        <dbReference type="ChEBI" id="CHEBI:15377"/>
        <dbReference type="ChEBI" id="CHEBI:57766"/>
        <dbReference type="ChEBI" id="CHEBI:58278"/>
        <dbReference type="EC" id="4.2.1.19"/>
    </reaction>
</comment>
<comment type="pathway">
    <text evidence="1">Amino-acid biosynthesis; L-histidine biosynthesis; L-histidine from 5-phospho-alpha-D-ribose 1-diphosphate: step 6/9.</text>
</comment>
<comment type="subcellular location">
    <subcellularLocation>
        <location evidence="1">Cytoplasm</location>
    </subcellularLocation>
</comment>
<comment type="similarity">
    <text evidence="1">Belongs to the imidazoleglycerol-phosphate dehydratase family.</text>
</comment>
<protein>
    <recommendedName>
        <fullName evidence="1">Imidazoleglycerol-phosphate dehydratase</fullName>
        <shortName evidence="1">IGPD</shortName>
        <ecNumber evidence="1">4.2.1.19</ecNumber>
    </recommendedName>
</protein>
<organism>
    <name type="scientific">Teredinibacter turnerae (strain ATCC 39867 / T7901)</name>
    <dbReference type="NCBI Taxonomy" id="377629"/>
    <lineage>
        <taxon>Bacteria</taxon>
        <taxon>Pseudomonadati</taxon>
        <taxon>Pseudomonadota</taxon>
        <taxon>Gammaproteobacteria</taxon>
        <taxon>Cellvibrionales</taxon>
        <taxon>Cellvibrionaceae</taxon>
        <taxon>Teredinibacter</taxon>
    </lineage>
</organism>
<keyword id="KW-0028">Amino-acid biosynthesis</keyword>
<keyword id="KW-0963">Cytoplasm</keyword>
<keyword id="KW-0368">Histidine biosynthesis</keyword>
<keyword id="KW-0456">Lyase</keyword>
<keyword id="KW-1185">Reference proteome</keyword>
<sequence length="197" mass="21914">MQERKAAVNRDTLETQISVALNLDGTGAAAFATGVPFLEHMMDQIARHGMIDLDVRCQGDTHIDDHHSVEDIGITIGQAMHQAVGDKRGIRRYGHAYVPLDEALSRVVIDFSGRPGLEMHIPFTQKRIGSFDTELFWEFFQGFVNHAGVTLHIDCLRGHNAHHQIETVFKAFGRALRMALEVDPRMGNAMPSTKGTL</sequence>